<comment type="function">
    <text evidence="1">Has antibacterial activity.</text>
</comment>
<comment type="subcellular location">
    <subcellularLocation>
        <location evidence="1">Secreted</location>
    </subcellularLocation>
</comment>
<comment type="tissue specificity">
    <text>Expressed by the venom gland.</text>
</comment>
<comment type="PTM">
    <text evidence="3">Contains 5 disulfide bonds.</text>
</comment>
<comment type="similarity">
    <text evidence="3">Belongs to the venom protein 11 family. 01 (wap-1) subfamily.</text>
</comment>
<protein>
    <recommendedName>
        <fullName>U15-lycotoxin-Ls1d</fullName>
    </recommendedName>
    <alternativeName>
        <fullName>Toxin-like structure LSTX-N8</fullName>
    </alternativeName>
</protein>
<dbReference type="EMBL" id="EU926125">
    <property type="protein sequence ID" value="ACI41457.1"/>
    <property type="molecule type" value="mRNA"/>
</dbReference>
<dbReference type="EMBL" id="FM864129">
    <property type="protein sequence ID" value="CAS03726.1"/>
    <property type="molecule type" value="mRNA"/>
</dbReference>
<dbReference type="SMR" id="B6DD41"/>
<dbReference type="ArachnoServer" id="AS001069">
    <property type="toxin name" value="U15-lycotoxin-Ls1d"/>
</dbReference>
<dbReference type="GO" id="GO:0005576">
    <property type="term" value="C:extracellular region"/>
    <property type="evidence" value="ECO:0007669"/>
    <property type="project" value="UniProtKB-SubCell"/>
</dbReference>
<dbReference type="GO" id="GO:0090729">
    <property type="term" value="F:toxin activity"/>
    <property type="evidence" value="ECO:0007669"/>
    <property type="project" value="UniProtKB-KW"/>
</dbReference>
<dbReference type="GO" id="GO:0042742">
    <property type="term" value="P:defense response to bacterium"/>
    <property type="evidence" value="ECO:0007669"/>
    <property type="project" value="UniProtKB-KW"/>
</dbReference>
<dbReference type="InterPro" id="IPR036645">
    <property type="entry name" value="Elafin-like_sf"/>
</dbReference>
<dbReference type="SUPFAM" id="SSF57256">
    <property type="entry name" value="Elafin-like"/>
    <property type="match status" value="1"/>
</dbReference>
<feature type="signal peptide" evidence="2">
    <location>
        <begin position="1"/>
        <end position="20"/>
    </location>
</feature>
<feature type="chain" id="PRO_0000401884" description="U15-lycotoxin-Ls1d">
    <location>
        <begin position="21"/>
        <end position="86"/>
    </location>
</feature>
<feature type="domain" description="WAP">
    <location>
        <begin position="21"/>
        <end position="66"/>
    </location>
</feature>
<feature type="disulfide bond" evidence="1">
    <location>
        <begin position="24"/>
        <end position="54"/>
    </location>
</feature>
<feature type="disulfide bond" evidence="1">
    <location>
        <begin position="32"/>
        <end position="58"/>
    </location>
</feature>
<feature type="disulfide bond" evidence="1">
    <location>
        <begin position="41"/>
        <end position="53"/>
    </location>
</feature>
<feature type="disulfide bond" evidence="3">
    <location>
        <begin position="42"/>
        <end position="80"/>
    </location>
</feature>
<feature type="disulfide bond" evidence="1">
    <location>
        <begin position="47"/>
        <end position="62"/>
    </location>
</feature>
<accession>B6DD41</accession>
<sequence>MNSKIFAVLLLLAFLSCVLSDQYCPKSSITACKKMNIRNDCCKDDDCTGGSWCCATPCGNFCKYPTDRPGGKRAAGGKSCKTGYVY</sequence>
<keyword id="KW-0044">Antibiotic</keyword>
<keyword id="KW-0929">Antimicrobial</keyword>
<keyword id="KW-1015">Disulfide bond</keyword>
<keyword id="KW-0964">Secreted</keyword>
<keyword id="KW-0732">Signal</keyword>
<keyword id="KW-0800">Toxin</keyword>
<reference key="1">
    <citation type="journal article" date="2010" name="Zoology">
        <title>Transcriptome analysis of the venom glands of the Chinese wolf spider Lycosa singoriensis.</title>
        <authorList>
            <person name="Zhang Y."/>
            <person name="Chen J."/>
            <person name="Tang X."/>
            <person name="Wang F."/>
            <person name="Jiang L."/>
            <person name="Xiong X."/>
            <person name="Wang M."/>
            <person name="Rong M."/>
            <person name="Liu Z."/>
            <person name="Liang S."/>
        </authorList>
    </citation>
    <scope>NUCLEOTIDE SEQUENCE [LARGE SCALE MRNA]</scope>
    <source>
        <tissue>Venom gland</tissue>
    </source>
</reference>
<name>TXF08_LYCSI</name>
<proteinExistence type="evidence at transcript level"/>
<organism>
    <name type="scientific">Lycosa singoriensis</name>
    <name type="common">Wolf spider</name>
    <name type="synonym">Aranea singoriensis</name>
    <dbReference type="NCBI Taxonomy" id="434756"/>
    <lineage>
        <taxon>Eukaryota</taxon>
        <taxon>Metazoa</taxon>
        <taxon>Ecdysozoa</taxon>
        <taxon>Arthropoda</taxon>
        <taxon>Chelicerata</taxon>
        <taxon>Arachnida</taxon>
        <taxon>Araneae</taxon>
        <taxon>Araneomorphae</taxon>
        <taxon>Entelegynae</taxon>
        <taxon>Lycosoidea</taxon>
        <taxon>Lycosidae</taxon>
        <taxon>Lycosa</taxon>
    </lineage>
</organism>
<evidence type="ECO:0000250" key="1"/>
<evidence type="ECO:0000255" key="2"/>
<evidence type="ECO:0000305" key="3"/>